<feature type="chain" id="PRO_0000053256" description="Hemoglobin subunit gamma-2">
    <location>
        <begin position="1"/>
        <end position="147"/>
    </location>
</feature>
<feature type="domain" description="Globin" evidence="3">
    <location>
        <begin position="3"/>
        <end position="147"/>
    </location>
</feature>
<feature type="binding site" description="distal binding residue" evidence="3">
    <location>
        <position position="64"/>
    </location>
    <ligand>
        <name>heme b</name>
        <dbReference type="ChEBI" id="CHEBI:60344"/>
    </ligand>
    <ligandPart>
        <name>Fe</name>
        <dbReference type="ChEBI" id="CHEBI:18248"/>
    </ligandPart>
</feature>
<feature type="binding site" description="proximal binding residue" evidence="3">
    <location>
        <position position="93"/>
    </location>
    <ligand>
        <name>heme b</name>
        <dbReference type="ChEBI" id="CHEBI:60344"/>
    </ligand>
    <ligandPart>
        <name>Fe</name>
        <dbReference type="ChEBI" id="CHEBI:18248"/>
    </ligandPart>
</feature>
<feature type="modified residue" description="Phosphothreonine" evidence="1">
    <location>
        <position position="13"/>
    </location>
</feature>
<feature type="modified residue" description="Phosphoserine" evidence="2">
    <location>
        <position position="45"/>
    </location>
</feature>
<feature type="modified residue" description="Phosphoserine" evidence="2">
    <location>
        <position position="51"/>
    </location>
</feature>
<feature type="modified residue" description="Phosphoserine" evidence="2">
    <location>
        <position position="53"/>
    </location>
</feature>
<feature type="modified residue" description="N6-acetyllysine" evidence="1">
    <location>
        <position position="60"/>
    </location>
</feature>
<feature type="modified residue" description="N6-acetyllysine" evidence="1">
    <location>
        <position position="83"/>
    </location>
</feature>
<feature type="modified residue" description="S-nitrosocysteine" evidence="1">
    <location>
        <position position="94"/>
    </location>
</feature>
<feature type="modified residue" description="Phosphoserine" evidence="2">
    <location>
        <position position="140"/>
    </location>
</feature>
<feature type="modified residue" description="Phosphoserine" evidence="2">
    <location>
        <position position="143"/>
    </location>
</feature>
<feature type="modified residue" description="Phosphoserine" evidence="2">
    <location>
        <position position="144"/>
    </location>
</feature>
<evidence type="ECO:0000250" key="1">
    <source>
        <dbReference type="UniProtKB" id="P68871"/>
    </source>
</evidence>
<evidence type="ECO:0000250" key="2">
    <source>
        <dbReference type="UniProtKB" id="P69892"/>
    </source>
</evidence>
<evidence type="ECO:0000255" key="3">
    <source>
        <dbReference type="PROSITE-ProRule" id="PRU00238"/>
    </source>
</evidence>
<reference key="1">
    <citation type="journal article" date="1990" name="J. Biol. Chem.">
        <title>Molecular history of gene conversions in the primate fetal gamma-globin genes. Nucleotide sequences from the common gibbon, Hylobates lar.</title>
        <authorList>
            <person name="Fitch D.H.A."/>
            <person name="Mainone C."/>
            <person name="Goodman M."/>
            <person name="Slightom J.L."/>
        </authorList>
    </citation>
    <scope>NUCLEOTIDE SEQUENCE [GENOMIC DNA]</scope>
</reference>
<proteinExistence type="evidence at transcript level"/>
<comment type="function">
    <text evidence="2">Gamma chains make up the fetal hemoglobin F, in combination with alpha chains.</text>
</comment>
<comment type="subunit">
    <text evidence="2">Heterotetramer of two alpha chains and two gamma chains in fetal hemoglobin (Hb F).</text>
</comment>
<comment type="tissue specificity">
    <text>Red blood cells.</text>
</comment>
<comment type="similarity">
    <text evidence="3">Belongs to the globin family.</text>
</comment>
<dbReference type="EMBL" id="J05174">
    <property type="protein sequence ID" value="AAA35452.1"/>
    <property type="molecule type" value="Genomic_DNA"/>
</dbReference>
<dbReference type="PIR" id="I37036">
    <property type="entry name" value="I37036"/>
</dbReference>
<dbReference type="SMR" id="P61948"/>
<dbReference type="GO" id="GO:0072562">
    <property type="term" value="C:blood microparticle"/>
    <property type="evidence" value="ECO:0007669"/>
    <property type="project" value="TreeGrafter"/>
</dbReference>
<dbReference type="GO" id="GO:0031838">
    <property type="term" value="C:haptoglobin-hemoglobin complex"/>
    <property type="evidence" value="ECO:0007669"/>
    <property type="project" value="TreeGrafter"/>
</dbReference>
<dbReference type="GO" id="GO:0005833">
    <property type="term" value="C:hemoglobin complex"/>
    <property type="evidence" value="ECO:0007669"/>
    <property type="project" value="InterPro"/>
</dbReference>
<dbReference type="GO" id="GO:0031720">
    <property type="term" value="F:haptoglobin binding"/>
    <property type="evidence" value="ECO:0007669"/>
    <property type="project" value="TreeGrafter"/>
</dbReference>
<dbReference type="GO" id="GO:0020037">
    <property type="term" value="F:heme binding"/>
    <property type="evidence" value="ECO:0007669"/>
    <property type="project" value="InterPro"/>
</dbReference>
<dbReference type="GO" id="GO:0031721">
    <property type="term" value="F:hemoglobin alpha binding"/>
    <property type="evidence" value="ECO:0007669"/>
    <property type="project" value="TreeGrafter"/>
</dbReference>
<dbReference type="GO" id="GO:0046872">
    <property type="term" value="F:metal ion binding"/>
    <property type="evidence" value="ECO:0007669"/>
    <property type="project" value="UniProtKB-KW"/>
</dbReference>
<dbReference type="GO" id="GO:0043177">
    <property type="term" value="F:organic acid binding"/>
    <property type="evidence" value="ECO:0007669"/>
    <property type="project" value="TreeGrafter"/>
</dbReference>
<dbReference type="GO" id="GO:0019825">
    <property type="term" value="F:oxygen binding"/>
    <property type="evidence" value="ECO:0007669"/>
    <property type="project" value="InterPro"/>
</dbReference>
<dbReference type="GO" id="GO:0005344">
    <property type="term" value="F:oxygen carrier activity"/>
    <property type="evidence" value="ECO:0007669"/>
    <property type="project" value="UniProtKB-KW"/>
</dbReference>
<dbReference type="GO" id="GO:0004601">
    <property type="term" value="F:peroxidase activity"/>
    <property type="evidence" value="ECO:0007669"/>
    <property type="project" value="TreeGrafter"/>
</dbReference>
<dbReference type="GO" id="GO:0042744">
    <property type="term" value="P:hydrogen peroxide catabolic process"/>
    <property type="evidence" value="ECO:0007669"/>
    <property type="project" value="TreeGrafter"/>
</dbReference>
<dbReference type="CDD" id="cd08925">
    <property type="entry name" value="Hb-beta-like"/>
    <property type="match status" value="1"/>
</dbReference>
<dbReference type="FunFam" id="1.10.490.10:FF:000001">
    <property type="entry name" value="Hemoglobin subunit beta"/>
    <property type="match status" value="1"/>
</dbReference>
<dbReference type="Gene3D" id="1.10.490.10">
    <property type="entry name" value="Globins"/>
    <property type="match status" value="1"/>
</dbReference>
<dbReference type="InterPro" id="IPR000971">
    <property type="entry name" value="Globin"/>
</dbReference>
<dbReference type="InterPro" id="IPR009050">
    <property type="entry name" value="Globin-like_sf"/>
</dbReference>
<dbReference type="InterPro" id="IPR012292">
    <property type="entry name" value="Globin/Proto"/>
</dbReference>
<dbReference type="InterPro" id="IPR002337">
    <property type="entry name" value="Hemoglobin_b"/>
</dbReference>
<dbReference type="InterPro" id="IPR050056">
    <property type="entry name" value="Hemoglobin_oxygen_transport"/>
</dbReference>
<dbReference type="PANTHER" id="PTHR11442">
    <property type="entry name" value="HEMOGLOBIN FAMILY MEMBER"/>
    <property type="match status" value="1"/>
</dbReference>
<dbReference type="PANTHER" id="PTHR11442:SF52">
    <property type="entry name" value="HEMOGLOBIN SUBUNIT GAMMA-1"/>
    <property type="match status" value="1"/>
</dbReference>
<dbReference type="Pfam" id="PF00042">
    <property type="entry name" value="Globin"/>
    <property type="match status" value="1"/>
</dbReference>
<dbReference type="PRINTS" id="PR00814">
    <property type="entry name" value="BETAHAEM"/>
</dbReference>
<dbReference type="SUPFAM" id="SSF46458">
    <property type="entry name" value="Globin-like"/>
    <property type="match status" value="1"/>
</dbReference>
<dbReference type="PROSITE" id="PS01033">
    <property type="entry name" value="GLOBIN"/>
    <property type="match status" value="1"/>
</dbReference>
<protein>
    <recommendedName>
        <fullName>Hemoglobin subunit gamma-2</fullName>
    </recommendedName>
    <alternativeName>
        <fullName>Gamma-2-globin</fullName>
    </alternativeName>
    <alternativeName>
        <fullName>Hemoglobin gamma-2 chain</fullName>
    </alternativeName>
    <alternativeName>
        <fullName>Hemoglobin gamma-G chain</fullName>
    </alternativeName>
</protein>
<accession>P61948</accession>
<accession>P16175</accession>
<name>HBG2_HYLLA</name>
<keyword id="KW-0007">Acetylation</keyword>
<keyword id="KW-0349">Heme</keyword>
<keyword id="KW-0408">Iron</keyword>
<keyword id="KW-0479">Metal-binding</keyword>
<keyword id="KW-0561">Oxygen transport</keyword>
<keyword id="KW-0597">Phosphoprotein</keyword>
<keyword id="KW-0702">S-nitrosylation</keyword>
<keyword id="KW-0813">Transport</keyword>
<sequence length="147" mass="16071">MGHFTEEDKATITSLWGKVNVEDVGGETLGRLLVVYPWTQRFFDSFGNLSSASAIMGNPKVKAHGKKVLTSLGGAIKNLDDLKGTFAQLSELHCDKLHVDPENFRLLGNVLVTVLAIHFGKEFTPEVQASWQKMVAGVASALSSRYH</sequence>
<gene>
    <name type="primary">HBG2</name>
</gene>
<organism>
    <name type="scientific">Hylobates lar</name>
    <name type="common">Lar gibbon</name>
    <name type="synonym">White-handed gibbon</name>
    <dbReference type="NCBI Taxonomy" id="9580"/>
    <lineage>
        <taxon>Eukaryota</taxon>
        <taxon>Metazoa</taxon>
        <taxon>Chordata</taxon>
        <taxon>Craniata</taxon>
        <taxon>Vertebrata</taxon>
        <taxon>Euteleostomi</taxon>
        <taxon>Mammalia</taxon>
        <taxon>Eutheria</taxon>
        <taxon>Euarchontoglires</taxon>
        <taxon>Primates</taxon>
        <taxon>Haplorrhini</taxon>
        <taxon>Catarrhini</taxon>
        <taxon>Hylobatidae</taxon>
        <taxon>Hylobates</taxon>
    </lineage>
</organism>